<feature type="signal peptide" evidence="1">
    <location>
        <begin position="1"/>
        <end position="20"/>
    </location>
</feature>
<feature type="chain" id="PRO_0000043197" description="G-protein coupled receptor family C group 6 member A">
    <location>
        <begin position="21"/>
        <end position="928"/>
    </location>
</feature>
<feature type="topological domain" description="Extracellular" evidence="1">
    <location>
        <begin position="21"/>
        <end position="594"/>
    </location>
</feature>
<feature type="transmembrane region" description="Helical" evidence="1">
    <location>
        <begin position="595"/>
        <end position="615"/>
    </location>
</feature>
<feature type="topological domain" description="Cytoplasmic" evidence="1">
    <location>
        <begin position="616"/>
        <end position="630"/>
    </location>
</feature>
<feature type="transmembrane region" description="Helical" evidence="1">
    <location>
        <begin position="631"/>
        <end position="651"/>
    </location>
</feature>
<feature type="topological domain" description="Extracellular" evidence="1">
    <location>
        <begin position="652"/>
        <end position="669"/>
    </location>
</feature>
<feature type="transmembrane region" description="Helical" evidence="1">
    <location>
        <begin position="670"/>
        <end position="690"/>
    </location>
</feature>
<feature type="topological domain" description="Cytoplasmic" evidence="1">
    <location>
        <begin position="691"/>
        <end position="706"/>
    </location>
</feature>
<feature type="transmembrane region" description="Helical" evidence="1">
    <location>
        <begin position="707"/>
        <end position="727"/>
    </location>
</feature>
<feature type="topological domain" description="Extracellular" evidence="1">
    <location>
        <begin position="728"/>
        <end position="750"/>
    </location>
</feature>
<feature type="transmembrane region" description="Helical" evidence="1">
    <location>
        <begin position="751"/>
        <end position="771"/>
    </location>
</feature>
<feature type="topological domain" description="Cytoplasmic" evidence="1">
    <location>
        <begin position="772"/>
        <end position="784"/>
    </location>
</feature>
<feature type="transmembrane region" description="Helical" evidence="1">
    <location>
        <begin position="785"/>
        <end position="805"/>
    </location>
</feature>
<feature type="topological domain" description="Extracellular" evidence="1">
    <location>
        <begin position="806"/>
        <end position="812"/>
    </location>
</feature>
<feature type="transmembrane region" description="Helical" evidence="1">
    <location>
        <begin position="813"/>
        <end position="833"/>
    </location>
</feature>
<feature type="topological domain" description="Cytoplasmic" evidence="1">
    <location>
        <begin position="834"/>
        <end position="928"/>
    </location>
</feature>
<feature type="glycosylation site" description="N-linked (GlcNAc...) asparagine" evidence="1">
    <location>
        <position position="332"/>
    </location>
</feature>
<feature type="glycosylation site" description="N-linked (GlcNAc...) asparagine" evidence="1">
    <location>
        <position position="555"/>
    </location>
</feature>
<feature type="glycosylation site" description="N-linked (GlcNAc...) asparagine" evidence="1">
    <location>
        <position position="567"/>
    </location>
</feature>
<feature type="disulfide bond" description="Interchain" evidence="2">
    <location>
        <position position="131"/>
    </location>
</feature>
<feature type="splice variant" id="VSP_016456" description="In isoform 2." evidence="9">
    <location>
        <begin position="271"/>
        <end position="445"/>
    </location>
</feature>
<feature type="splice variant" id="VSP_016457" description="In isoform 3." evidence="9">
    <location>
        <begin position="446"/>
        <end position="516"/>
    </location>
</feature>
<reference key="1">
    <citation type="journal article" date="2005" name="J. Neurochem.">
        <title>Cloning and characterization of a family C orphan G-protein coupled receptor.</title>
        <authorList>
            <person name="Kuang D."/>
            <person name="Yao Y."/>
            <person name="Lam J."/>
            <person name="Tsushima R.G."/>
            <person name="Hampson D.R."/>
        </authorList>
    </citation>
    <scope>NUCLEOTIDE SEQUENCE [MRNA] (ISOFORMS 1; 2 AND 3)</scope>
    <scope>SUBCELLULAR LOCATION</scope>
    <scope>SUBUNIT</scope>
    <scope>GLYCOSYLATION</scope>
    <scope>TISSUE SPECIFICITY</scope>
    <source>
        <strain>CD-1</strain>
    </source>
</reference>
<reference key="2">
    <citation type="submission" date="2002-04" db="EMBL/GenBank/DDBJ databases">
        <title>Cloning of a metabotropic glutamate/pheromone receptor (Gprc6a).</title>
        <authorList>
            <person name="Lorenz-Depiereux B."/>
            <person name="Dorner M."/>
            <person name="Strom T.M."/>
        </authorList>
    </citation>
    <scope>NUCLEOTIDE SEQUENCE [MRNA]</scope>
    <source>
        <strain>Swiss Webster / NIH</strain>
    </source>
</reference>
<reference key="3">
    <citation type="journal article" date="2004" name="Genome Res.">
        <title>The status, quality, and expansion of the NIH full-length cDNA project: the Mammalian Gene Collection (MGC).</title>
        <authorList>
            <consortium name="The MGC Project Team"/>
        </authorList>
    </citation>
    <scope>NUCLEOTIDE SEQUENCE [LARGE SCALE MRNA]</scope>
</reference>
<reference key="4">
    <citation type="journal article" date="2005" name="Mol. Pharmacol.">
        <title>Deorphanization of GPRC6A: a promiscuous L-alpha-amino acid receptor with preference for basic amino acids.</title>
        <authorList>
            <person name="Wellendorph P."/>
            <person name="Hansen K.B."/>
            <person name="Balsgaard A."/>
            <person name="Greenwood J.R."/>
            <person name="Egebjerg J."/>
            <person name="Brauener-Osborne H."/>
        </authorList>
    </citation>
    <scope>FUNCTION</scope>
</reference>
<reference key="5">
    <citation type="journal article" date="2005" name="J. Biol. Chem.">
        <title>Identification of a novel extracellular cation-sensing G-protein-coupled receptor.</title>
        <authorList>
            <person name="Pi M."/>
            <person name="Faber P."/>
            <person name="Ekema G."/>
            <person name="Jackson P.D."/>
            <person name="Ting A."/>
            <person name="Wang N."/>
            <person name="Fontilla-Poole M."/>
            <person name="Mays R.W."/>
            <person name="Brunden K.R."/>
            <person name="Harrington J.J."/>
            <person name="Quarles L.D."/>
        </authorList>
    </citation>
    <scope>FUNCTION</scope>
    <scope>TISSUE SPECIFICITY</scope>
</reference>
<reference key="6">
    <citation type="journal article" date="2008" name="PLoS ONE">
        <title>GPRC6A null mice exhibit osteopenia, feminization and metabolic syndrome.</title>
        <authorList>
            <person name="Pi M."/>
            <person name="Chen L."/>
            <person name="Huang M.Z."/>
            <person name="Zhu W."/>
            <person name="Ringhofer B."/>
            <person name="Luo J."/>
            <person name="Christenson L."/>
            <person name="Li B."/>
            <person name="Zhang J."/>
            <person name="Jackson P.D."/>
            <person name="Faber P."/>
            <person name="Brunden K.R."/>
            <person name="Harrington J.J."/>
            <person name="Quarles L.D."/>
        </authorList>
    </citation>
    <scope>FUNCTION</scope>
    <scope>DISRUPTION PHENOTYPE</scope>
</reference>
<reference key="7">
    <citation type="journal article" date="2010" name="J. Biol. Chem.">
        <title>GPRC6A mediates the non-genomic effects of steroids.</title>
        <authorList>
            <person name="Pi M."/>
            <person name="Parrill A.L."/>
            <person name="Quarles L.D."/>
        </authorList>
    </citation>
    <scope>FUNCTION</scope>
    <scope>DISRUPTION PHENOTYPE</scope>
</reference>
<reference key="8">
    <citation type="journal article" date="2011" name="Cell">
        <title>Endocrine regulation of male fertility by the skeleton.</title>
        <authorList>
            <person name="Oury F."/>
            <person name="Sumara G."/>
            <person name="Sumara O."/>
            <person name="Ferron M."/>
            <person name="Chang H."/>
            <person name="Smith C.E."/>
            <person name="Hermo L."/>
            <person name="Suarez S."/>
            <person name="Roth B.L."/>
            <person name="Ducy P."/>
            <person name="Karsenty G."/>
        </authorList>
    </citation>
    <scope>FUNCTION</scope>
    <scope>DISRUPTION PHENOTYPE</scope>
</reference>
<name>GPC6A_MOUSE</name>
<dbReference type="EMBL" id="AY735399">
    <property type="protein sequence ID" value="AAW68012.1"/>
    <property type="molecule type" value="mRNA"/>
</dbReference>
<dbReference type="EMBL" id="AY735400">
    <property type="protein sequence ID" value="AAW68013.1"/>
    <property type="molecule type" value="mRNA"/>
</dbReference>
<dbReference type="EMBL" id="AY735401">
    <property type="protein sequence ID" value="AAW68014.1"/>
    <property type="molecule type" value="mRNA"/>
</dbReference>
<dbReference type="EMBL" id="AY101365">
    <property type="protein sequence ID" value="AAM22280.1"/>
    <property type="molecule type" value="mRNA"/>
</dbReference>
<dbReference type="EMBL" id="BC108998">
    <property type="protein sequence ID" value="AAI08999.1"/>
    <property type="molecule type" value="mRNA"/>
</dbReference>
<dbReference type="CCDS" id="CCDS23834.1">
    <molecule id="Q8K4Z6-1"/>
</dbReference>
<dbReference type="RefSeq" id="NP_694711.1">
    <molecule id="Q8K4Z6-1"/>
    <property type="nucleotide sequence ID" value="NM_153071.1"/>
</dbReference>
<dbReference type="SMR" id="Q8K4Z6"/>
<dbReference type="FunCoup" id="Q8K4Z6">
    <property type="interactions" value="238"/>
</dbReference>
<dbReference type="STRING" id="10090.ENSMUSP00000020062"/>
<dbReference type="BindingDB" id="Q8K4Z6"/>
<dbReference type="ChEMBL" id="CHEMBL3347255"/>
<dbReference type="GuidetoPHARMACOLOGY" id="55"/>
<dbReference type="GlyCosmos" id="Q8K4Z6">
    <property type="glycosylation" value="3 sites, No reported glycans"/>
</dbReference>
<dbReference type="GlyGen" id="Q8K4Z6">
    <property type="glycosylation" value="3 sites"/>
</dbReference>
<dbReference type="PhosphoSitePlus" id="Q8K4Z6"/>
<dbReference type="PaxDb" id="10090-ENSMUSP00000020062"/>
<dbReference type="Antibodypedia" id="19443">
    <property type="antibodies" value="265 antibodies from 28 providers"/>
</dbReference>
<dbReference type="DNASU" id="210198"/>
<dbReference type="Ensembl" id="ENSMUST00000020062.4">
    <molecule id="Q8K4Z6-1"/>
    <property type="protein sequence ID" value="ENSMUSP00000020062.4"/>
    <property type="gene ID" value="ENSMUSG00000019905.9"/>
</dbReference>
<dbReference type="Ensembl" id="ENSMUST00000218684.2">
    <molecule id="Q8K4Z6-2"/>
    <property type="protein sequence ID" value="ENSMUSP00000152031.2"/>
    <property type="gene ID" value="ENSMUSG00000019905.9"/>
</dbReference>
<dbReference type="Ensembl" id="ENSMUST00000219286.2">
    <molecule id="Q8K4Z6-3"/>
    <property type="protein sequence ID" value="ENSMUSP00000151341.2"/>
    <property type="gene ID" value="ENSMUSG00000019905.9"/>
</dbReference>
<dbReference type="GeneID" id="210198"/>
<dbReference type="KEGG" id="mmu:210198"/>
<dbReference type="UCSC" id="uc007fau.1">
    <molecule id="Q8K4Z6-1"/>
    <property type="organism name" value="mouse"/>
</dbReference>
<dbReference type="UCSC" id="uc007fav.1">
    <molecule id="Q8K4Z6-2"/>
    <property type="organism name" value="mouse"/>
</dbReference>
<dbReference type="UCSC" id="uc007faw.1">
    <molecule id="Q8K4Z6-3"/>
    <property type="organism name" value="mouse"/>
</dbReference>
<dbReference type="AGR" id="MGI:2429498"/>
<dbReference type="CTD" id="222545"/>
<dbReference type="MGI" id="MGI:2429498">
    <property type="gene designation" value="Gprc6a"/>
</dbReference>
<dbReference type="VEuPathDB" id="HostDB:ENSMUSG00000019905"/>
<dbReference type="eggNOG" id="KOG1056">
    <property type="taxonomic scope" value="Eukaryota"/>
</dbReference>
<dbReference type="GeneTree" id="ENSGT00940000158416"/>
<dbReference type="HOGENOM" id="CLU_005389_1_0_1"/>
<dbReference type="InParanoid" id="Q8K4Z6"/>
<dbReference type="OMA" id="ASPHTCC"/>
<dbReference type="OrthoDB" id="425344at2759"/>
<dbReference type="PhylomeDB" id="Q8K4Z6"/>
<dbReference type="TreeFam" id="TF331269"/>
<dbReference type="Reactome" id="R-MMU-416476">
    <property type="pathway name" value="G alpha (q) signalling events"/>
</dbReference>
<dbReference type="Reactome" id="R-MMU-420499">
    <property type="pathway name" value="Class C/3 (Metabotropic glutamate/pheromone receptors)"/>
</dbReference>
<dbReference type="BioGRID-ORCS" id="210198">
    <property type="hits" value="0 hits in 78 CRISPR screens"/>
</dbReference>
<dbReference type="PRO" id="PR:Q8K4Z6"/>
<dbReference type="Proteomes" id="UP000000589">
    <property type="component" value="Chromosome 10"/>
</dbReference>
<dbReference type="RNAct" id="Q8K4Z6">
    <property type="molecule type" value="protein"/>
</dbReference>
<dbReference type="Bgee" id="ENSMUSG00000019905">
    <property type="expression patterns" value="Expressed in embryonic cell in embryo and 4 other cell types or tissues"/>
</dbReference>
<dbReference type="GO" id="GO:0009986">
    <property type="term" value="C:cell surface"/>
    <property type="evidence" value="ECO:0000314"/>
    <property type="project" value="MGI"/>
</dbReference>
<dbReference type="GO" id="GO:0005886">
    <property type="term" value="C:plasma membrane"/>
    <property type="evidence" value="ECO:0000314"/>
    <property type="project" value="UniProt"/>
</dbReference>
<dbReference type="GO" id="GO:0008528">
    <property type="term" value="F:G protein-coupled peptide receptor activity"/>
    <property type="evidence" value="ECO:0000315"/>
    <property type="project" value="MGI"/>
</dbReference>
<dbReference type="GO" id="GO:0004930">
    <property type="term" value="F:G protein-coupled receptor activity"/>
    <property type="evidence" value="ECO:0000314"/>
    <property type="project" value="MGI"/>
</dbReference>
<dbReference type="GO" id="GO:0007189">
    <property type="term" value="P:adenylate cyclase-activating G protein-coupled receptor signaling pathway"/>
    <property type="evidence" value="ECO:0000315"/>
    <property type="project" value="MGI"/>
</dbReference>
<dbReference type="GO" id="GO:0019722">
    <property type="term" value="P:calcium-mediated signaling"/>
    <property type="evidence" value="ECO:0000314"/>
    <property type="project" value="MGI"/>
</dbReference>
<dbReference type="GO" id="GO:0007186">
    <property type="term" value="P:G protein-coupled receptor signaling pathway"/>
    <property type="evidence" value="ECO:0000314"/>
    <property type="project" value="MGI"/>
</dbReference>
<dbReference type="GO" id="GO:0035774">
    <property type="term" value="P:positive regulation of insulin secretion involved in cellular response to glucose stimulus"/>
    <property type="evidence" value="ECO:0000315"/>
    <property type="project" value="MGI"/>
</dbReference>
<dbReference type="GO" id="GO:2000224">
    <property type="term" value="P:regulation of testosterone biosynthetic process"/>
    <property type="evidence" value="ECO:0000314"/>
    <property type="project" value="UniProt"/>
</dbReference>
<dbReference type="GO" id="GO:0043200">
    <property type="term" value="P:response to amino acid"/>
    <property type="evidence" value="ECO:0000314"/>
    <property type="project" value="UniProtKB"/>
</dbReference>
<dbReference type="CDD" id="cd06361">
    <property type="entry name" value="PBP1_GPC6A-like"/>
    <property type="match status" value="1"/>
</dbReference>
<dbReference type="FunFam" id="3.40.50.2300:FF:000152">
    <property type="entry name" value="G protein-coupled receptor class C group 6 member A"/>
    <property type="match status" value="1"/>
</dbReference>
<dbReference type="FunFam" id="2.10.50.30:FF:000004">
    <property type="entry name" value="Taste receptor type 1 member 3-like protein"/>
    <property type="match status" value="1"/>
</dbReference>
<dbReference type="Gene3D" id="3.40.50.2300">
    <property type="match status" value="2"/>
</dbReference>
<dbReference type="Gene3D" id="2.10.50.30">
    <property type="entry name" value="GPCR, family 3, nine cysteines domain"/>
    <property type="match status" value="1"/>
</dbReference>
<dbReference type="InterPro" id="IPR001828">
    <property type="entry name" value="ANF_lig-bd_rcpt"/>
</dbReference>
<dbReference type="InterPro" id="IPR000337">
    <property type="entry name" value="GPCR_3"/>
</dbReference>
<dbReference type="InterPro" id="IPR011500">
    <property type="entry name" value="GPCR_3_9-Cys_dom"/>
</dbReference>
<dbReference type="InterPro" id="IPR038550">
    <property type="entry name" value="GPCR_3_9-Cys_sf"/>
</dbReference>
<dbReference type="InterPro" id="IPR017978">
    <property type="entry name" value="GPCR_3_C"/>
</dbReference>
<dbReference type="InterPro" id="IPR000068">
    <property type="entry name" value="GPCR_3_Ca_sens_rcpt-rel"/>
</dbReference>
<dbReference type="InterPro" id="IPR017979">
    <property type="entry name" value="GPCR_3_CS"/>
</dbReference>
<dbReference type="InterPro" id="IPR028082">
    <property type="entry name" value="Peripla_BP_I"/>
</dbReference>
<dbReference type="PANTHER" id="PTHR24061">
    <property type="entry name" value="CALCIUM-SENSING RECEPTOR-RELATED"/>
    <property type="match status" value="1"/>
</dbReference>
<dbReference type="PANTHER" id="PTHR24061:SF5">
    <property type="entry name" value="G-PROTEIN COUPLED RECEPTOR FAMILY C GROUP 6 MEMBER A"/>
    <property type="match status" value="1"/>
</dbReference>
<dbReference type="Pfam" id="PF00003">
    <property type="entry name" value="7tm_3"/>
    <property type="match status" value="1"/>
</dbReference>
<dbReference type="Pfam" id="PF01094">
    <property type="entry name" value="ANF_receptor"/>
    <property type="match status" value="1"/>
</dbReference>
<dbReference type="Pfam" id="PF07562">
    <property type="entry name" value="NCD3G"/>
    <property type="match status" value="1"/>
</dbReference>
<dbReference type="PRINTS" id="PR00592">
    <property type="entry name" value="CASENSINGR"/>
</dbReference>
<dbReference type="PRINTS" id="PR00248">
    <property type="entry name" value="GPCRMGR"/>
</dbReference>
<dbReference type="SUPFAM" id="SSF53822">
    <property type="entry name" value="Periplasmic binding protein-like I"/>
    <property type="match status" value="1"/>
</dbReference>
<dbReference type="PROSITE" id="PS00980">
    <property type="entry name" value="G_PROTEIN_RECEP_F3_2"/>
    <property type="match status" value="1"/>
</dbReference>
<dbReference type="PROSITE" id="PS50259">
    <property type="entry name" value="G_PROTEIN_RECEP_F3_4"/>
    <property type="match status" value="1"/>
</dbReference>
<proteinExistence type="evidence at protein level"/>
<accession>Q8K4Z6</accession>
<accession>Q5DK51</accession>
<accession>Q5DK52</accession>
<sequence>MALLITVVTCFMIILDTSQSCHTPDDFVAITSPGHIMIGGLFAIHEKMLSSDDHPRRPQIQKCAGFEISVFLQTLAMIHSIEMINNSTLLSGVKLGYEIYDTCTEVTAAMAATLRFLSKFNCSRETVVFQCDYSSYMPRVKAVIGAGYSETSIAVSRMLNLQLMPQVSYESTAEILSDKIRFPSFLRTVPSDFYQTKAMAHLIRQSGWNWIGAITTDDDYGRLALNTFAIQAAENNVCIAFKEVLPAFLSDNTIEVRINQTLEKIIAEAQVNVIVVFLRKFHVFNLFTKAIERKISKIWIASDNWSTATKIITIPNVKKLGKVVGFAFRRGNTSSFHSFLQTLHMYPNDNNKPLHEFAMLVSACKYIKDGDLSQCISNYSQATLTYDTTKTIENHLFKRNDFLWHYTEPGLIYSIQLAVFALGHAIRDLCQARDCKKPNAFQPWELLAVLKNVTFTDGRNSFHFDAHGDLNTGYDVVLWKETNGLMTVTKMAEYDLQRDVFITTNQETKHEFRKLKQILSKCSKECSPGQMKKATGSQHSCCYECVSCPENHYSNETDMDHCLLCNNETHWAPVRSTTCFEKEVEYLDWDDSLALLLIALSLLGIAFVLAIGIIFTRNLKTPVVKSSGGLVVCYVMLICHALNFASTGFFIGEPQDFACKTRQTLFGVSFTLCVSCILTKSLKILLAFSFDPKLTMFLKCLYRPVPIVLTCTGIQVVICTLWLVLAAPSVEENISLPRVIILECEEGSALAFGTMLGYITVLAFICFVFAFKGRKLPENYNEAKFLTFGMLIYFIAWITFIPVYTTTFGKYLPAVEIIVILISNYGILCCIFFPKCYIILCKQKTNTKSAFLQMVYNYSAHSVDSLALSHVSLDSTSYDTATTNQSPGNKMTACQNDNHLPAQVLPHTGTAKTIKASKTLRQKRSSSI</sequence>
<gene>
    <name type="primary">Gprc6a</name>
</gene>
<keyword id="KW-0025">Alternative splicing</keyword>
<keyword id="KW-1003">Cell membrane</keyword>
<keyword id="KW-1015">Disulfide bond</keyword>
<keyword id="KW-0297">G-protein coupled receptor</keyword>
<keyword id="KW-0325">Glycoprotein</keyword>
<keyword id="KW-0472">Membrane</keyword>
<keyword id="KW-0675">Receptor</keyword>
<keyword id="KW-1185">Reference proteome</keyword>
<keyword id="KW-0732">Signal</keyword>
<keyword id="KW-0807">Transducer</keyword>
<keyword id="KW-0812">Transmembrane</keyword>
<keyword id="KW-1133">Transmembrane helix</keyword>
<evidence type="ECO:0000255" key="1"/>
<evidence type="ECO:0000255" key="2">
    <source>
        <dbReference type="PROSITE-ProRule" id="PRU00114"/>
    </source>
</evidence>
<evidence type="ECO:0000269" key="3">
    <source>
    </source>
</evidence>
<evidence type="ECO:0000269" key="4">
    <source>
    </source>
</evidence>
<evidence type="ECO:0000269" key="5">
    <source>
    </source>
</evidence>
<evidence type="ECO:0000269" key="6">
    <source>
    </source>
</evidence>
<evidence type="ECO:0000269" key="7">
    <source>
    </source>
</evidence>
<evidence type="ECO:0000269" key="8">
    <source>
    </source>
</evidence>
<evidence type="ECO:0000303" key="9">
    <source>
    </source>
</evidence>
<evidence type="ECO:0000305" key="10"/>
<organism>
    <name type="scientific">Mus musculus</name>
    <name type="common">Mouse</name>
    <dbReference type="NCBI Taxonomy" id="10090"/>
    <lineage>
        <taxon>Eukaryota</taxon>
        <taxon>Metazoa</taxon>
        <taxon>Chordata</taxon>
        <taxon>Craniata</taxon>
        <taxon>Vertebrata</taxon>
        <taxon>Euteleostomi</taxon>
        <taxon>Mammalia</taxon>
        <taxon>Eutheria</taxon>
        <taxon>Euarchontoglires</taxon>
        <taxon>Glires</taxon>
        <taxon>Rodentia</taxon>
        <taxon>Myomorpha</taxon>
        <taxon>Muroidea</taxon>
        <taxon>Muridae</taxon>
        <taxon>Murinae</taxon>
        <taxon>Mus</taxon>
        <taxon>Mus</taxon>
    </lineage>
</organism>
<protein>
    <recommendedName>
        <fullName>G-protein coupled receptor family C group 6 member A</fullName>
    </recommendedName>
</protein>
<comment type="function">
    <text evidence="3 5 6 7 8">Receptor activated by multiple ligands, including osteocalcin (BGLAP), basic amino acids, and various cations (PubMed:15576628, PubMed:16199532, PubMed:21333348). Activated by amino acids with a preference for basic amino acids such as L-Lys, L-Arg and L-ornithine but also by small and polar amino acids (PubMed:15576628). The L-alpha amino acids respond is augmented by divalent cations Ca(2+) and Mg(2+) (PubMed:16199532). Seems to act through a G(q)/G(11) and G(i)-coupled pathway (PubMed:15576628, PubMed:16199532). Regulates testosterone production by acting as a ligand for uncarboxylated osteocalcin hormone: osteocalcin-binding at the surface of Leydig cells initiates a signaling response that promotes the expression of enzymes required for testosterone synthesis in a CREB-dependent manner (PubMed:21333348). Mediates the non-genomic effects of androgens in multiple tissue (PubMed:19050760). May coordinate nutritional and hormonal anabolic signals through the sensing of extracellular amino acids, osteocalcin, divalent ions and its responsiveness to anabolic steroids (PubMed:19050760, PubMed:20947496).</text>
</comment>
<comment type="subunit">
    <text evidence="4">Homodimer; disulfide-linked.</text>
</comment>
<comment type="subcellular location">
    <subcellularLocation>
        <location evidence="4">Cell membrane</location>
        <topology evidence="4">Multi-pass membrane protein</topology>
    </subcellularLocation>
</comment>
<comment type="alternative products">
    <event type="alternative splicing"/>
    <isoform>
        <id>Q8K4Z6-1</id>
        <name>1</name>
        <sequence type="displayed"/>
    </isoform>
    <isoform>
        <id>Q8K4Z6-2</id>
        <name>2</name>
        <sequence type="described" ref="VSP_016456"/>
    </isoform>
    <isoform>
        <id>Q8K4Z6-3</id>
        <name>3</name>
        <sequence type="described" ref="VSP_016457"/>
    </isoform>
</comment>
<comment type="tissue specificity">
    <text evidence="4 5">Expressed at high level in liver, lung, spleen and heart. Expressed at lower level in kidney, skeletal muscle and brain. Expressed in 7 dpc, 11 dpc, 15 dpc and 17 dpc embryos.</text>
</comment>
<comment type="PTM">
    <text evidence="4">N-glycosylated.</text>
</comment>
<comment type="disruption phenotype">
    <text evidence="6 7 8">Deficient mice shown normal body weight, an increased fat mass, decreased lean body, hyperglycemia and insulin resistance, proteinuria, renal calcium, phosphate wasting, impaired bone mineral density and defective testicular function (PubMed:19050760, PubMed:20947496). Conditional deletion in Leydig cells leads to decreased male fertility (PubMed:21333348).</text>
</comment>
<comment type="similarity">
    <text evidence="10">Belongs to the G-protein coupled receptor 3 family.</text>
</comment>